<protein>
    <recommendedName>
        <fullName evidence="1">Protein Vpu</fullName>
    </recommendedName>
    <alternativeName>
        <fullName evidence="1">U ORF protein</fullName>
    </alternativeName>
    <alternativeName>
        <fullName evidence="1">Viral protein U</fullName>
    </alternativeName>
</protein>
<sequence>MSILQIVAIVAIIVALILAIVVWTIVYIEYKRLLRQRKIDWLIDRIRERAEDSGNESEGDTEELSTLVEMEPDNFRNDNDM</sequence>
<keyword id="KW-0014">AIDS</keyword>
<keyword id="KW-0053">Apoptosis</keyword>
<keyword id="KW-1043">Host membrane</keyword>
<keyword id="KW-0945">Host-virus interaction</keyword>
<keyword id="KW-1090">Inhibition of host innate immune response by virus</keyword>
<keyword id="KW-1084">Inhibition of host tetherin by virus</keyword>
<keyword id="KW-0407">Ion channel</keyword>
<keyword id="KW-0406">Ion transport</keyword>
<keyword id="KW-0472">Membrane</keyword>
<keyword id="KW-0597">Phosphoprotein</keyword>
<keyword id="KW-0812">Transmembrane</keyword>
<keyword id="KW-1133">Transmembrane helix</keyword>
<keyword id="KW-0813">Transport</keyword>
<keyword id="KW-0899">Viral immunoevasion</keyword>
<proteinExistence type="inferred from homology"/>
<reference key="1">
    <citation type="journal article" date="2001" name="AIDS Res. Hum. Retroviruses">
        <title>Molecular characterization of a highly divergent HIV type 1 isolate obtained early in the AIDS epidemic from the Democratic Republic of Congo.</title>
        <authorList>
            <person name="Gao F."/>
            <person name="Trask S.A."/>
            <person name="Hui H."/>
            <person name="Mamaeva O."/>
            <person name="Chen Y."/>
            <person name="Theodore T.S."/>
            <person name="Foley B.T."/>
            <person name="Korber B.T."/>
            <person name="Shaw G.M."/>
            <person name="Hahn B.H."/>
        </authorList>
    </citation>
    <scope>NUCLEOTIDE SEQUENCE [GENOMIC RNA]</scope>
    <source>
        <strain>Isolate 83CD003</strain>
    </source>
</reference>
<reference key="2">
    <citation type="journal article" date="1986" name="Proc. Natl. Acad. Sci. U.S.A.">
        <title>Identification of conserved and divergent domains within the envelope gene of the acquired immunodeficiency syndrome retrovirus.</title>
        <authorList>
            <person name="Willey R.W."/>
            <person name="Rutledge R.A."/>
            <person name="Dias S."/>
            <person name="Folks T."/>
            <person name="Theodore T."/>
            <person name="Buckler C.E."/>
            <person name="Martin M.A."/>
        </authorList>
    </citation>
    <scope>NUCLEOTIDE SEQUENCE [GENOMIC RNA] OF 37-81</scope>
    <source>
        <strain>Isolate Z-3</strain>
    </source>
</reference>
<gene>
    <name evidence="1" type="primary">vpu</name>
</gene>
<organism>
    <name type="scientific">Human immunodeficiency virus type 1</name>
    <name type="common">HIV-1</name>
    <dbReference type="NCBI Taxonomy" id="11676"/>
    <lineage>
        <taxon>Viruses</taxon>
        <taxon>Riboviria</taxon>
        <taxon>Pararnavirae</taxon>
        <taxon>Artverviricota</taxon>
        <taxon>Revtraviricetes</taxon>
        <taxon>Ortervirales</taxon>
        <taxon>Retroviridae</taxon>
        <taxon>Orthoretrovirinae</taxon>
        <taxon>Lentivirus</taxon>
    </lineage>
</organism>
<dbReference type="EMBL" id="AF286236">
    <property type="protein sequence ID" value="AAK65967.1"/>
    <property type="molecule type" value="Genomic_DNA"/>
</dbReference>
<dbReference type="EMBL" id="K03347">
    <property type="protein sequence ID" value="AAA45372.1"/>
    <property type="status" value="ALT_INIT"/>
    <property type="molecule type" value="Genomic_RNA"/>
</dbReference>
<dbReference type="Proteomes" id="UP000122148">
    <property type="component" value="Genome"/>
</dbReference>
<dbReference type="GO" id="GO:0033644">
    <property type="term" value="C:host cell membrane"/>
    <property type="evidence" value="ECO:0007669"/>
    <property type="project" value="UniProtKB-SubCell"/>
</dbReference>
<dbReference type="GO" id="GO:0016020">
    <property type="term" value="C:membrane"/>
    <property type="evidence" value="ECO:0007669"/>
    <property type="project" value="UniProtKB-UniRule"/>
</dbReference>
<dbReference type="GO" id="GO:0042609">
    <property type="term" value="F:CD4 receptor binding"/>
    <property type="evidence" value="ECO:0007669"/>
    <property type="project" value="UniProtKB-UniRule"/>
</dbReference>
<dbReference type="GO" id="GO:0005261">
    <property type="term" value="F:monoatomic cation channel activity"/>
    <property type="evidence" value="ECO:0007669"/>
    <property type="project" value="UniProtKB-UniRule"/>
</dbReference>
<dbReference type="GO" id="GO:0032801">
    <property type="term" value="P:receptor catabolic process"/>
    <property type="evidence" value="ECO:0007669"/>
    <property type="project" value="UniProtKB-UniRule"/>
</dbReference>
<dbReference type="GO" id="GO:0052170">
    <property type="term" value="P:symbiont-mediated suppression of host innate immune response"/>
    <property type="evidence" value="ECO:0007669"/>
    <property type="project" value="UniProtKB-KW"/>
</dbReference>
<dbReference type="GO" id="GO:0039502">
    <property type="term" value="P:symbiont-mediated suppression of host type I interferon-mediated signaling pathway"/>
    <property type="evidence" value="ECO:0007669"/>
    <property type="project" value="UniProtKB-UniRule"/>
</dbReference>
<dbReference type="GO" id="GO:0039587">
    <property type="term" value="P:symbiont-mediated-mediated suppression of host tetherin activity"/>
    <property type="evidence" value="ECO:0007669"/>
    <property type="project" value="UniProtKB-UniRule"/>
</dbReference>
<dbReference type="GO" id="GO:0019076">
    <property type="term" value="P:viral release from host cell"/>
    <property type="evidence" value="ECO:0007669"/>
    <property type="project" value="UniProtKB-UniRule"/>
</dbReference>
<dbReference type="Gene3D" id="1.10.195.10">
    <property type="entry name" value="HIV-1 VPU cytoplasmic domain"/>
    <property type="match status" value="1"/>
</dbReference>
<dbReference type="HAMAP" id="MF_04082">
    <property type="entry name" value="HIV_VPU"/>
    <property type="match status" value="1"/>
</dbReference>
<dbReference type="InterPro" id="IPR008187">
    <property type="entry name" value="Vpu"/>
</dbReference>
<dbReference type="InterPro" id="IPR009032">
    <property type="entry name" value="Vpu_cyt_dom_sf"/>
</dbReference>
<dbReference type="Pfam" id="PF00558">
    <property type="entry name" value="Vpu"/>
    <property type="match status" value="1"/>
</dbReference>
<dbReference type="SUPFAM" id="SSF57647">
    <property type="entry name" value="HIV-1 VPU cytoplasmic domain"/>
    <property type="match status" value="1"/>
</dbReference>
<accession>P08805</accession>
<accession>Q90DU2</accession>
<organismHost>
    <name type="scientific">Homo sapiens</name>
    <name type="common">Human</name>
    <dbReference type="NCBI Taxonomy" id="9606"/>
</organismHost>
<name>VPU_HV1</name>
<comment type="function">
    <text evidence="1">Enhances virion budding by targeting host CD4 and Tetherin/BST2 to proteasome degradation. Degradation of CD4 prevents any unwanted premature interactions between viral Env and its host receptor CD4 in the endoplasmic reticulum. Degradation of antiretroviral protein Tetherin/BST2 is important for virion budding, as BST2 tethers new viral particles to the host cell membrane. Mechanistically, Vpu bridges either CD4 or BST2 to BTRC, a substrate recognition subunit of the Skp1/Cullin/F-box protein E3 ubiquitin ligase, induces their ubiquitination and subsequent proteasomal degradation. The alteration of the E3 ligase specificity by Vpu seems to promote the degradation of host IKBKB, leading to NF-kappa-B down-regulation and subsequent apoptosis. Acts as a viroporin that forms an oligomeric ion channel in membranes. Modulates the host DNA repair mechanisms to promote degradation of nuclear viral cDNA in cells that are already productively infected in order to suppress immune sensing and proviral hyper-integration (superinfection). Manipulates PML-NBs and modulates SUMOylation of host BLM protein thereby enhancing its DNA-end processing activity toward viral unintegrated linear DNA. Also inhibits RAD52-mediated homologous repair of viral cDNA, preventing the generation of dead-end circular forms of single copies of the long terminal repeat and permitting sustained nucleolytic attack.</text>
</comment>
<comment type="activity regulation">
    <text evidence="1">Ion channel activity is inhibited by hexamethylene amiloride in vitro.</text>
</comment>
<comment type="subunit">
    <text evidence="1">Homopentamer. Interacts with host CD4 and BRTC; these interactions induce proteasomal degradation of CD4. Interacts with host BST2; this interaction leads to the degradation of host BST2. Interacts with host FBXW11. Interacts with host AP1M1; this interaction plays a role in the mistrafficking and subsequent degradation of host BST2. Interacts with host RANBP2; this interaction allows Vpu to down-regulate host BLM sumoylation.</text>
</comment>
<comment type="subcellular location">
    <subcellularLocation>
        <location evidence="1">Host membrane</location>
        <topology evidence="1">Single-pass type I membrane protein</topology>
    </subcellularLocation>
</comment>
<comment type="domain">
    <text evidence="1">The N-terminus and transmembrane domains are required for self-oligomerization and proper virion budding, whereas the cytoplasmic domain is required for CD4 degradation. The cytoplasmic domain is composed of 2 amphipathic alpha helix that form a U-shape.</text>
</comment>
<comment type="PTM">
    <text evidence="1">Phosphorylated by host CK2. This phosphorylation is necessary for interaction with human BTRC and degradation of CD4.</text>
</comment>
<comment type="miscellaneous">
    <text evidence="1">HIV-1 lineages are divided in three main groups, M (for Major), O (for Outlier), and N (for New, or Non-M, Non-O). The vast majority of strains found worldwide belong to the group M. Group O seems to be endemic to and largely confined to Cameroon and neighboring countries in West Central Africa, where these viruses represent a small minority of HIV-1 strains. The group N is represented by a limited number of isolates from Cameroonian persons. The group M is further subdivided in 9 clades or subtypes (A to D, F to H, J and K).</text>
</comment>
<comment type="similarity">
    <text evidence="1">Belongs to the HIV-1 VPU protein family.</text>
</comment>
<comment type="sequence caution">
    <conflict type="erroneous initiation">
        <sequence resource="EMBL-CDS" id="AAA45372"/>
    </conflict>
</comment>
<feature type="chain" id="PRO_0000085412" description="Protein Vpu">
    <location>
        <begin position="1"/>
        <end position="81"/>
    </location>
</feature>
<feature type="topological domain" description="Extracellular" evidence="1">
    <location>
        <begin position="1"/>
        <end position="7"/>
    </location>
</feature>
<feature type="transmembrane region" description="Helical" evidence="1">
    <location>
        <begin position="8"/>
        <end position="28"/>
    </location>
</feature>
<feature type="topological domain" description="Cytoplasmic" evidence="1">
    <location>
        <begin position="29"/>
        <end position="81"/>
    </location>
</feature>
<feature type="region of interest" description="Disordered" evidence="2">
    <location>
        <begin position="50"/>
        <end position="81"/>
    </location>
</feature>
<feature type="compositionally biased region" description="Acidic residues" evidence="2">
    <location>
        <begin position="53"/>
        <end position="63"/>
    </location>
</feature>
<feature type="modified residue" description="Phosphoserine; by host CK2" evidence="1">
    <location>
        <position position="53"/>
    </location>
</feature>
<feature type="modified residue" description="Phosphoserine; by host CK2" evidence="1">
    <location>
        <position position="57"/>
    </location>
</feature>
<evidence type="ECO:0000255" key="1">
    <source>
        <dbReference type="HAMAP-Rule" id="MF_04082"/>
    </source>
</evidence>
<evidence type="ECO:0000256" key="2">
    <source>
        <dbReference type="SAM" id="MobiDB-lite"/>
    </source>
</evidence>